<keyword id="KW-0028">Amino-acid biosynthesis</keyword>
<keyword id="KW-0100">Branched-chain amino acid biosynthesis</keyword>
<keyword id="KW-0963">Cytoplasm</keyword>
<keyword id="KW-0432">Leucine biosynthesis</keyword>
<keyword id="KW-0460">Magnesium</keyword>
<keyword id="KW-0464">Manganese</keyword>
<keyword id="KW-0479">Metal-binding</keyword>
<keyword id="KW-0520">NAD</keyword>
<keyword id="KW-0560">Oxidoreductase</keyword>
<keyword id="KW-1185">Reference proteome</keyword>
<name>LEU3_BIFLO</name>
<reference key="1">
    <citation type="journal article" date="2002" name="Proc. Natl. Acad. Sci. U.S.A.">
        <title>The genome sequence of Bifidobacterium longum reflects its adaptation to the human gastrointestinal tract.</title>
        <authorList>
            <person name="Schell M.A."/>
            <person name="Karmirantzou M."/>
            <person name="Snel B."/>
            <person name="Vilanova D."/>
            <person name="Berger B."/>
            <person name="Pessi G."/>
            <person name="Zwahlen M.-C."/>
            <person name="Desiere F."/>
            <person name="Bork P."/>
            <person name="Delley M."/>
            <person name="Pridmore R.D."/>
            <person name="Arigoni F."/>
        </authorList>
    </citation>
    <scope>NUCLEOTIDE SEQUENCE [LARGE SCALE GENOMIC DNA]</scope>
    <source>
        <strain>NCC 2705</strain>
    </source>
</reference>
<dbReference type="EC" id="1.1.1.85" evidence="1"/>
<dbReference type="EMBL" id="AE014295">
    <property type="protein sequence ID" value="AAN25025.1"/>
    <property type="molecule type" value="Genomic_DNA"/>
</dbReference>
<dbReference type="RefSeq" id="NP_696389.1">
    <property type="nucleotide sequence ID" value="NC_004307.2"/>
</dbReference>
<dbReference type="RefSeq" id="WP_007051335.1">
    <property type="nucleotide sequence ID" value="NC_004307.2"/>
</dbReference>
<dbReference type="SMR" id="Q8G500"/>
<dbReference type="STRING" id="206672.BL1218"/>
<dbReference type="EnsemblBacteria" id="AAN25025">
    <property type="protein sequence ID" value="AAN25025"/>
    <property type="gene ID" value="BL1218"/>
</dbReference>
<dbReference type="KEGG" id="blo:BL1218"/>
<dbReference type="PATRIC" id="fig|206672.9.peg.935"/>
<dbReference type="HOGENOM" id="CLU_031953_0_1_11"/>
<dbReference type="OrthoDB" id="5289857at2"/>
<dbReference type="PhylomeDB" id="Q8G500"/>
<dbReference type="UniPathway" id="UPA00048">
    <property type="reaction ID" value="UER00072"/>
</dbReference>
<dbReference type="Proteomes" id="UP000000439">
    <property type="component" value="Chromosome"/>
</dbReference>
<dbReference type="GO" id="GO:0005737">
    <property type="term" value="C:cytoplasm"/>
    <property type="evidence" value="ECO:0007669"/>
    <property type="project" value="UniProtKB-SubCell"/>
</dbReference>
<dbReference type="GO" id="GO:0003862">
    <property type="term" value="F:3-isopropylmalate dehydrogenase activity"/>
    <property type="evidence" value="ECO:0007669"/>
    <property type="project" value="UniProtKB-UniRule"/>
</dbReference>
<dbReference type="GO" id="GO:0046872">
    <property type="term" value="F:metal ion binding"/>
    <property type="evidence" value="ECO:0007669"/>
    <property type="project" value="UniProtKB-KW"/>
</dbReference>
<dbReference type="GO" id="GO:0009098">
    <property type="term" value="P:L-leucine biosynthetic process"/>
    <property type="evidence" value="ECO:0007669"/>
    <property type="project" value="UniProtKB-UniRule"/>
</dbReference>
<dbReference type="Gene3D" id="3.40.718.10">
    <property type="entry name" value="Isopropylmalate Dehydrogenase"/>
    <property type="match status" value="1"/>
</dbReference>
<dbReference type="HAMAP" id="MF_01035">
    <property type="entry name" value="LeuB_type2"/>
    <property type="match status" value="1"/>
</dbReference>
<dbReference type="InterPro" id="IPR050501">
    <property type="entry name" value="ICDH/IPMDH"/>
</dbReference>
<dbReference type="InterPro" id="IPR024084">
    <property type="entry name" value="IsoPropMal-DH-like_dom"/>
</dbReference>
<dbReference type="InterPro" id="IPR023698">
    <property type="entry name" value="LeuB_actb"/>
</dbReference>
<dbReference type="NCBIfam" id="NF002898">
    <property type="entry name" value="PRK03437.1"/>
    <property type="match status" value="1"/>
</dbReference>
<dbReference type="PANTHER" id="PTHR43275">
    <property type="entry name" value="D-MALATE DEHYDROGENASE [DECARBOXYLATING]"/>
    <property type="match status" value="1"/>
</dbReference>
<dbReference type="PANTHER" id="PTHR43275:SF1">
    <property type="entry name" value="D-MALATE DEHYDROGENASE [DECARBOXYLATING]"/>
    <property type="match status" value="1"/>
</dbReference>
<dbReference type="Pfam" id="PF00180">
    <property type="entry name" value="Iso_dh"/>
    <property type="match status" value="1"/>
</dbReference>
<dbReference type="SMART" id="SM01329">
    <property type="entry name" value="Iso_dh"/>
    <property type="match status" value="1"/>
</dbReference>
<dbReference type="SUPFAM" id="SSF53659">
    <property type="entry name" value="Isocitrate/Isopropylmalate dehydrogenase-like"/>
    <property type="match status" value="1"/>
</dbReference>
<feature type="chain" id="PRO_0000083794" description="3-isopropylmalate dehydrogenase">
    <location>
        <begin position="1"/>
        <end position="343"/>
    </location>
</feature>
<feature type="binding site" evidence="1">
    <location>
        <position position="94"/>
    </location>
    <ligand>
        <name>substrate</name>
    </ligand>
</feature>
<feature type="binding site" evidence="1">
    <location>
        <position position="104"/>
    </location>
    <ligand>
        <name>substrate</name>
    </ligand>
</feature>
<feature type="binding site" evidence="1">
    <location>
        <position position="128"/>
    </location>
    <ligand>
        <name>substrate</name>
    </ligand>
</feature>
<feature type="binding site" evidence="1">
    <location>
        <position position="218"/>
    </location>
    <ligand>
        <name>Mg(2+)</name>
        <dbReference type="ChEBI" id="CHEBI:18420"/>
    </ligand>
</feature>
<feature type="binding site" evidence="1">
    <location>
        <position position="218"/>
    </location>
    <ligand>
        <name>substrate</name>
    </ligand>
</feature>
<feature type="binding site" evidence="1">
    <location>
        <position position="242"/>
    </location>
    <ligand>
        <name>Mg(2+)</name>
        <dbReference type="ChEBI" id="CHEBI:18420"/>
    </ligand>
</feature>
<feature type="binding site" evidence="1">
    <location>
        <position position="246"/>
    </location>
    <ligand>
        <name>Mg(2+)</name>
        <dbReference type="ChEBI" id="CHEBI:18420"/>
    </ligand>
</feature>
<feature type="binding site" evidence="1">
    <location>
        <begin position="278"/>
        <end position="290"/>
    </location>
    <ligand>
        <name>NAD(+)</name>
        <dbReference type="ChEBI" id="CHEBI:57540"/>
    </ligand>
</feature>
<feature type="site" description="Important for catalysis" evidence="1">
    <location>
        <position position="135"/>
    </location>
</feature>
<feature type="site" description="Important for catalysis" evidence="1">
    <location>
        <position position="185"/>
    </location>
</feature>
<evidence type="ECO:0000255" key="1">
    <source>
        <dbReference type="HAMAP-Rule" id="MF_01035"/>
    </source>
</evidence>
<sequence length="343" mass="37246">MAKTYKIAVIPGDGIGKEVTPWAQKALEKAAEGVADFEYENFDLGAERYLRDGAILPEDEEERIKANDAILLGAVGDPRIKAGILERGLLLKLRFDLDQYVNLRPSKLYKGVTSPLANPGDIDFVVVREGTEGLYCGAGGAVRRNTPQEVATEVSINTAYGVERVVRYAFKLAMKRKKHVTLVHKKNVLVNAGDMWQRIVDKVGEEYPEVTHDYQHIDAATIFLVSDPSRFDVILTDNLFGDILTDEAGSVVGGVGYSASGCINASDEFPSMFEPIHGSAPDIAGQNKANPTAAILSAAMLLEHLGFDDAAKKIHTAVEADIEELGSTVRSTDQVGKDILARM</sequence>
<protein>
    <recommendedName>
        <fullName evidence="1">3-isopropylmalate dehydrogenase</fullName>
        <ecNumber evidence="1">1.1.1.85</ecNumber>
    </recommendedName>
    <alternativeName>
        <fullName evidence="1">3-IPM-DH</fullName>
    </alternativeName>
    <alternativeName>
        <fullName evidence="1">Beta-IPM dehydrogenase</fullName>
        <shortName evidence="1">IMDH</shortName>
    </alternativeName>
</protein>
<accession>Q8G500</accession>
<organism>
    <name type="scientific">Bifidobacterium longum (strain NCC 2705)</name>
    <dbReference type="NCBI Taxonomy" id="206672"/>
    <lineage>
        <taxon>Bacteria</taxon>
        <taxon>Bacillati</taxon>
        <taxon>Actinomycetota</taxon>
        <taxon>Actinomycetes</taxon>
        <taxon>Bifidobacteriales</taxon>
        <taxon>Bifidobacteriaceae</taxon>
        <taxon>Bifidobacterium</taxon>
    </lineage>
</organism>
<gene>
    <name evidence="1" type="primary">leuB</name>
    <name type="ordered locus">BL1218</name>
</gene>
<comment type="function">
    <text evidence="1">Catalyzes the oxidation of 3-carboxy-2-hydroxy-4-methylpentanoate (3-isopropylmalate) to 3-carboxy-4-methyl-2-oxopentanoate. The product decarboxylates to 4-methyl-2 oxopentanoate.</text>
</comment>
<comment type="catalytic activity">
    <reaction evidence="1">
        <text>(2R,3S)-3-isopropylmalate + NAD(+) = 4-methyl-2-oxopentanoate + CO2 + NADH</text>
        <dbReference type="Rhea" id="RHEA:32271"/>
        <dbReference type="ChEBI" id="CHEBI:16526"/>
        <dbReference type="ChEBI" id="CHEBI:17865"/>
        <dbReference type="ChEBI" id="CHEBI:35121"/>
        <dbReference type="ChEBI" id="CHEBI:57540"/>
        <dbReference type="ChEBI" id="CHEBI:57945"/>
        <dbReference type="EC" id="1.1.1.85"/>
    </reaction>
</comment>
<comment type="cofactor">
    <cofactor evidence="1">
        <name>Mg(2+)</name>
        <dbReference type="ChEBI" id="CHEBI:18420"/>
    </cofactor>
    <cofactor evidence="1">
        <name>Mn(2+)</name>
        <dbReference type="ChEBI" id="CHEBI:29035"/>
    </cofactor>
    <text evidence="1">Binds 1 Mg(2+) or Mn(2+) ion per subunit.</text>
</comment>
<comment type="pathway">
    <text evidence="1">Amino-acid biosynthesis; L-leucine biosynthesis; L-leucine from 3-methyl-2-oxobutanoate: step 3/4.</text>
</comment>
<comment type="subunit">
    <text evidence="1">Homodimer.</text>
</comment>
<comment type="subcellular location">
    <subcellularLocation>
        <location evidence="1">Cytoplasm</location>
    </subcellularLocation>
</comment>
<comment type="similarity">
    <text evidence="1">Belongs to the isocitrate and isopropylmalate dehydrogenases family. LeuB type 2 subfamily.</text>
</comment>
<proteinExistence type="inferred from homology"/>